<gene>
    <name type="ordered locus">MIMI_L593</name>
</gene>
<protein>
    <recommendedName>
        <fullName>Putative prolyl 4-hydroxylase</fullName>
        <shortName>4-PH</shortName>
        <ecNumber>1.14.11.2</ecNumber>
    </recommendedName>
    <alternativeName>
        <fullName>Procollagen-proline,2-oxoglutarate-4-dioxygenase</fullName>
    </alternativeName>
</protein>
<organism>
    <name type="scientific">Acanthamoeba polyphaga mimivirus</name>
    <name type="common">APMV</name>
    <dbReference type="NCBI Taxonomy" id="212035"/>
    <lineage>
        <taxon>Viruses</taxon>
        <taxon>Varidnaviria</taxon>
        <taxon>Bamfordvirae</taxon>
        <taxon>Nucleocytoviricota</taxon>
        <taxon>Megaviricetes</taxon>
        <taxon>Imitervirales</taxon>
        <taxon>Mimiviridae</taxon>
        <taxon>Megamimivirinae</taxon>
        <taxon>Mimivirus</taxon>
        <taxon>Mimivirus bradfordmassiliense</taxon>
    </lineage>
</organism>
<proteinExistence type="evidence at protein level"/>
<evidence type="ECO:0000255" key="1">
    <source>
        <dbReference type="PROSITE-ProRule" id="PRU00805"/>
    </source>
</evidence>
<evidence type="ECO:0000269" key="2">
    <source>
    </source>
</evidence>
<evidence type="ECO:0000305" key="3"/>
<dbReference type="EC" id="1.14.11.2"/>
<dbReference type="EMBL" id="AY653733">
    <property type="protein sequence ID" value="AAV50856.1"/>
    <property type="molecule type" value="Genomic_DNA"/>
</dbReference>
<dbReference type="SMR" id="Q5UP57"/>
<dbReference type="KEGG" id="vg:9925229"/>
<dbReference type="OrthoDB" id="11494at10239"/>
<dbReference type="Proteomes" id="UP000001134">
    <property type="component" value="Genome"/>
</dbReference>
<dbReference type="GO" id="GO:0044423">
    <property type="term" value="C:virion component"/>
    <property type="evidence" value="ECO:0007669"/>
    <property type="project" value="UniProtKB-KW"/>
</dbReference>
<dbReference type="GO" id="GO:0005506">
    <property type="term" value="F:iron ion binding"/>
    <property type="evidence" value="ECO:0007669"/>
    <property type="project" value="InterPro"/>
</dbReference>
<dbReference type="GO" id="GO:0031418">
    <property type="term" value="F:L-ascorbic acid binding"/>
    <property type="evidence" value="ECO:0007669"/>
    <property type="project" value="UniProtKB-KW"/>
</dbReference>
<dbReference type="GO" id="GO:0004656">
    <property type="term" value="F:procollagen-proline 4-dioxygenase activity"/>
    <property type="evidence" value="ECO:0007669"/>
    <property type="project" value="UniProtKB-EC"/>
</dbReference>
<dbReference type="Gene3D" id="2.60.120.620">
    <property type="entry name" value="q2cbj1_9rhob like domain"/>
    <property type="match status" value="1"/>
</dbReference>
<dbReference type="InterPro" id="IPR005123">
    <property type="entry name" value="Oxoglu/Fe-dep_dioxygenase_dom"/>
</dbReference>
<dbReference type="InterPro" id="IPR045054">
    <property type="entry name" value="P4HA-like"/>
</dbReference>
<dbReference type="InterPro" id="IPR006620">
    <property type="entry name" value="Pro_4_hyd_alph"/>
</dbReference>
<dbReference type="InterPro" id="IPR044862">
    <property type="entry name" value="Pro_4_hyd_alph_FE2OG_OXY"/>
</dbReference>
<dbReference type="PANTHER" id="PTHR10869">
    <property type="entry name" value="PROLYL 4-HYDROXYLASE ALPHA SUBUNIT"/>
    <property type="match status" value="1"/>
</dbReference>
<dbReference type="PANTHER" id="PTHR10869:SF246">
    <property type="entry name" value="TRANSMEMBRANE PROLYL 4-HYDROXYLASE"/>
    <property type="match status" value="1"/>
</dbReference>
<dbReference type="Pfam" id="PF13640">
    <property type="entry name" value="2OG-FeII_Oxy_3"/>
    <property type="match status" value="1"/>
</dbReference>
<dbReference type="SMART" id="SM00702">
    <property type="entry name" value="P4Hc"/>
    <property type="match status" value="1"/>
</dbReference>
<dbReference type="PROSITE" id="PS51471">
    <property type="entry name" value="FE2OG_OXY"/>
    <property type="match status" value="1"/>
</dbReference>
<comment type="function">
    <text evidence="3">May catalyze the post-translational formation of 4-hydroxyproline in -Xaa-Pro-Gly- sequences in the 6 collagen-like proteins of Mimivirus.</text>
</comment>
<comment type="catalytic activity">
    <reaction>
        <text>L-prolyl-[collagen] + 2-oxoglutarate + O2 = trans-4-hydroxy-L-prolyl-[collagen] + succinate + CO2</text>
        <dbReference type="Rhea" id="RHEA:18945"/>
        <dbReference type="Rhea" id="RHEA-COMP:11676"/>
        <dbReference type="Rhea" id="RHEA-COMP:11680"/>
        <dbReference type="ChEBI" id="CHEBI:15379"/>
        <dbReference type="ChEBI" id="CHEBI:16526"/>
        <dbReference type="ChEBI" id="CHEBI:16810"/>
        <dbReference type="ChEBI" id="CHEBI:30031"/>
        <dbReference type="ChEBI" id="CHEBI:50342"/>
        <dbReference type="ChEBI" id="CHEBI:61965"/>
        <dbReference type="EC" id="1.14.11.2"/>
    </reaction>
</comment>
<comment type="cofactor">
    <cofactor>
        <name>Fe cation</name>
        <dbReference type="ChEBI" id="CHEBI:24875"/>
    </cofactor>
</comment>
<comment type="cofactor">
    <cofactor>
        <name>L-ascorbate</name>
        <dbReference type="ChEBI" id="CHEBI:38290"/>
    </cofactor>
</comment>
<comment type="subcellular location">
    <subcellularLocation>
        <location evidence="2">Virion</location>
    </subcellularLocation>
</comment>
<comment type="similarity">
    <text evidence="3">Belongs to the P4HA family.</text>
</comment>
<accession>Q5UP57</accession>
<organismHost>
    <name type="scientific">Acanthamoeba polyphaga</name>
    <name type="common">Amoeba</name>
    <dbReference type="NCBI Taxonomy" id="5757"/>
</organismHost>
<name>P4H_MIMIV</name>
<keyword id="KW-0223">Dioxygenase</keyword>
<keyword id="KW-0408">Iron</keyword>
<keyword id="KW-0479">Metal-binding</keyword>
<keyword id="KW-0560">Oxidoreductase</keyword>
<keyword id="KW-1185">Reference proteome</keyword>
<keyword id="KW-0946">Virion</keyword>
<keyword id="KW-0847">Vitamin C</keyword>
<reference key="1">
    <citation type="journal article" date="2004" name="Science">
        <title>The 1.2-megabase genome sequence of Mimivirus.</title>
        <authorList>
            <person name="Raoult D."/>
            <person name="Audic S."/>
            <person name="Robert C."/>
            <person name="Abergel C."/>
            <person name="Renesto P."/>
            <person name="Ogata H."/>
            <person name="La Scola B."/>
            <person name="Susan M."/>
            <person name="Claverie J.-M."/>
        </authorList>
    </citation>
    <scope>NUCLEOTIDE SEQUENCE [LARGE SCALE GENOMIC DNA]</scope>
    <source>
        <strain>Rowbotham-Bradford</strain>
    </source>
</reference>
<reference key="2">
    <citation type="journal article" date="2006" name="J. Virol.">
        <title>Mimivirus giant particles incorporate a large fraction of anonymous and unique gene products.</title>
        <authorList>
            <person name="Renesto P."/>
            <person name="Abergel C."/>
            <person name="Decloquement P."/>
            <person name="Moinier D."/>
            <person name="Azza S."/>
            <person name="Ogata H."/>
            <person name="Fourquet P."/>
            <person name="Gorvel J.-P."/>
            <person name="Claverie J.-M."/>
            <person name="Raoult D."/>
        </authorList>
    </citation>
    <scope>IDENTIFICATION BY MASS SPECTROMETRY [LARGE SCALE ANALYSIS]</scope>
    <scope>SUBCELLULAR LOCATION</scope>
</reference>
<sequence length="242" mass="27901">MKTVTIITIIVVIIVVILIIMVLSKSCVSHFRNVGSLNSRDVNLKDDFSYANIDDPYNKPFVLNNLINPTKCQEIMQFANGKLFDSQVLSGTDKNIRNSQQMWISKNNPMVKPIFENICRQFNVPFDNAEDLQVVRYLPNQYYNEHHDSCCDSSKQCSEFIERGGQRILTVLIYLNNEFSDGHTYFPNLNQKFKPKTGDALVFYPLANNSNKCHPYSLHAGMPVTSGEKWIANLWFRERKFS</sequence>
<feature type="chain" id="PRO_0000206660" description="Putative prolyl 4-hydroxylase">
    <location>
        <begin position="1"/>
        <end position="242"/>
    </location>
</feature>
<feature type="domain" description="Fe2OG dioxygenase" evidence="1">
    <location>
        <begin position="128"/>
        <end position="238"/>
    </location>
</feature>